<keyword id="KW-0067">ATP-binding</keyword>
<keyword id="KW-0175">Coiled coil</keyword>
<keyword id="KW-0479">Metal-binding</keyword>
<keyword id="KW-0547">Nucleotide-binding</keyword>
<keyword id="KW-1185">Reference proteome</keyword>
<keyword id="KW-0862">Zinc</keyword>
<keyword id="KW-0863">Zinc-finger</keyword>
<protein>
    <recommendedName>
        <fullName>Probable inactive serine/threonine-protein kinase DDB_G0274613</fullName>
    </recommendedName>
</protein>
<dbReference type="EMBL" id="AAFI02000012">
    <property type="protein sequence ID" value="EAL70199.1"/>
    <property type="molecule type" value="Genomic_DNA"/>
</dbReference>
<dbReference type="RefSeq" id="XP_644311.1">
    <property type="nucleotide sequence ID" value="XM_639219.1"/>
</dbReference>
<dbReference type="SMR" id="Q554L2"/>
<dbReference type="FunCoup" id="Q554L2">
    <property type="interactions" value="546"/>
</dbReference>
<dbReference type="STRING" id="44689.Q554L2"/>
<dbReference type="PaxDb" id="44689-DDB0230051"/>
<dbReference type="EnsemblProtists" id="EAL70199">
    <property type="protein sequence ID" value="EAL70199"/>
    <property type="gene ID" value="DDB_G0274613"/>
</dbReference>
<dbReference type="GeneID" id="8619739"/>
<dbReference type="KEGG" id="ddi:DDB_G0274613"/>
<dbReference type="dictyBase" id="DDB_G0274613"/>
<dbReference type="VEuPathDB" id="AmoebaDB:DDB_G0274613"/>
<dbReference type="eggNOG" id="KOG0660">
    <property type="taxonomic scope" value="Eukaryota"/>
</dbReference>
<dbReference type="HOGENOM" id="CLU_341439_0_0_1"/>
<dbReference type="InParanoid" id="Q554L2"/>
<dbReference type="OMA" id="FEFLECS"/>
<dbReference type="PRO" id="PR:Q554L2"/>
<dbReference type="Proteomes" id="UP000002195">
    <property type="component" value="Chromosome 2"/>
</dbReference>
<dbReference type="GO" id="GO:0005737">
    <property type="term" value="C:cytoplasm"/>
    <property type="evidence" value="ECO:0000318"/>
    <property type="project" value="GO_Central"/>
</dbReference>
<dbReference type="GO" id="GO:0005634">
    <property type="term" value="C:nucleus"/>
    <property type="evidence" value="ECO:0000318"/>
    <property type="project" value="GO_Central"/>
</dbReference>
<dbReference type="GO" id="GO:0005524">
    <property type="term" value="F:ATP binding"/>
    <property type="evidence" value="ECO:0007669"/>
    <property type="project" value="UniProtKB-KW"/>
</dbReference>
<dbReference type="GO" id="GO:0004674">
    <property type="term" value="F:protein serine/threonine kinase activity"/>
    <property type="evidence" value="ECO:0000318"/>
    <property type="project" value="GO_Central"/>
</dbReference>
<dbReference type="GO" id="GO:0008270">
    <property type="term" value="F:zinc ion binding"/>
    <property type="evidence" value="ECO:0007669"/>
    <property type="project" value="UniProtKB-KW"/>
</dbReference>
<dbReference type="GO" id="GO:0035556">
    <property type="term" value="P:intracellular signal transduction"/>
    <property type="evidence" value="ECO:0000318"/>
    <property type="project" value="GO_Central"/>
</dbReference>
<dbReference type="CDD" id="cd23143">
    <property type="entry name" value="RING-HC_CeBARD1-like"/>
    <property type="match status" value="1"/>
</dbReference>
<dbReference type="FunFam" id="3.30.40.10:FF:000811">
    <property type="entry name" value="RAD5p DNA helicase/Ubiquitin ligase"/>
    <property type="match status" value="1"/>
</dbReference>
<dbReference type="Gene3D" id="1.10.510.10">
    <property type="entry name" value="Transferase(Phosphotransferase) domain 1"/>
    <property type="match status" value="1"/>
</dbReference>
<dbReference type="Gene3D" id="3.30.40.10">
    <property type="entry name" value="Zinc/RING finger domain, C3HC4 (zinc finger)"/>
    <property type="match status" value="1"/>
</dbReference>
<dbReference type="InterPro" id="IPR050108">
    <property type="entry name" value="CDK"/>
</dbReference>
<dbReference type="InterPro" id="IPR011009">
    <property type="entry name" value="Kinase-like_dom_sf"/>
</dbReference>
<dbReference type="InterPro" id="IPR000719">
    <property type="entry name" value="Prot_kinase_dom"/>
</dbReference>
<dbReference type="InterPro" id="IPR001841">
    <property type="entry name" value="Znf_RING"/>
</dbReference>
<dbReference type="InterPro" id="IPR013083">
    <property type="entry name" value="Znf_RING/FYVE/PHD"/>
</dbReference>
<dbReference type="InterPro" id="IPR017907">
    <property type="entry name" value="Znf_RING_CS"/>
</dbReference>
<dbReference type="PANTHER" id="PTHR24056">
    <property type="entry name" value="CELL DIVISION PROTEIN KINASE"/>
    <property type="match status" value="1"/>
</dbReference>
<dbReference type="Pfam" id="PF00069">
    <property type="entry name" value="Pkinase"/>
    <property type="match status" value="1"/>
</dbReference>
<dbReference type="SUPFAM" id="SSF56112">
    <property type="entry name" value="Protein kinase-like (PK-like)"/>
    <property type="match status" value="1"/>
</dbReference>
<dbReference type="SUPFAM" id="SSF57850">
    <property type="entry name" value="RING/U-box"/>
    <property type="match status" value="1"/>
</dbReference>
<dbReference type="PROSITE" id="PS50011">
    <property type="entry name" value="PROTEIN_KINASE_DOM"/>
    <property type="match status" value="1"/>
</dbReference>
<dbReference type="PROSITE" id="PS00518">
    <property type="entry name" value="ZF_RING_1"/>
    <property type="match status" value="1"/>
</dbReference>
<dbReference type="PROSITE" id="PS50089">
    <property type="entry name" value="ZF_RING_2"/>
    <property type="match status" value="1"/>
</dbReference>
<organism>
    <name type="scientific">Dictyostelium discoideum</name>
    <name type="common">Social amoeba</name>
    <dbReference type="NCBI Taxonomy" id="44689"/>
    <lineage>
        <taxon>Eukaryota</taxon>
        <taxon>Amoebozoa</taxon>
        <taxon>Evosea</taxon>
        <taxon>Eumycetozoa</taxon>
        <taxon>Dictyostelia</taxon>
        <taxon>Dictyosteliales</taxon>
        <taxon>Dictyosteliaceae</taxon>
        <taxon>Dictyostelium</taxon>
    </lineage>
</organism>
<reference key="1">
    <citation type="journal article" date="2002" name="Nature">
        <title>Sequence and analysis of chromosome 2 of Dictyostelium discoideum.</title>
        <authorList>
            <person name="Gloeckner G."/>
            <person name="Eichinger L."/>
            <person name="Szafranski K."/>
            <person name="Pachebat J.A."/>
            <person name="Bankier A.T."/>
            <person name="Dear P.H."/>
            <person name="Lehmann R."/>
            <person name="Baumgart C."/>
            <person name="Parra G."/>
            <person name="Abril J.F."/>
            <person name="Guigo R."/>
            <person name="Kumpf K."/>
            <person name="Tunggal B."/>
            <person name="Cox E.C."/>
            <person name="Quail M.A."/>
            <person name="Platzer M."/>
            <person name="Rosenthal A."/>
            <person name="Noegel A.A."/>
        </authorList>
    </citation>
    <scope>NUCLEOTIDE SEQUENCE [LARGE SCALE GENOMIC DNA]</scope>
    <source>
        <strain>AX4</strain>
    </source>
</reference>
<reference key="2">
    <citation type="journal article" date="2005" name="Nature">
        <title>The genome of the social amoeba Dictyostelium discoideum.</title>
        <authorList>
            <person name="Eichinger L."/>
            <person name="Pachebat J.A."/>
            <person name="Gloeckner G."/>
            <person name="Rajandream M.A."/>
            <person name="Sucgang R."/>
            <person name="Berriman M."/>
            <person name="Song J."/>
            <person name="Olsen R."/>
            <person name="Szafranski K."/>
            <person name="Xu Q."/>
            <person name="Tunggal B."/>
            <person name="Kummerfeld S."/>
            <person name="Madera M."/>
            <person name="Konfortov B.A."/>
            <person name="Rivero F."/>
            <person name="Bankier A.T."/>
            <person name="Lehmann R."/>
            <person name="Hamlin N."/>
            <person name="Davies R."/>
            <person name="Gaudet P."/>
            <person name="Fey P."/>
            <person name="Pilcher K."/>
            <person name="Chen G."/>
            <person name="Saunders D."/>
            <person name="Sodergren E.J."/>
            <person name="Davis P."/>
            <person name="Kerhornou A."/>
            <person name="Nie X."/>
            <person name="Hall N."/>
            <person name="Anjard C."/>
            <person name="Hemphill L."/>
            <person name="Bason N."/>
            <person name="Farbrother P."/>
            <person name="Desany B."/>
            <person name="Just E."/>
            <person name="Morio T."/>
            <person name="Rost R."/>
            <person name="Churcher C.M."/>
            <person name="Cooper J."/>
            <person name="Haydock S."/>
            <person name="van Driessche N."/>
            <person name="Cronin A."/>
            <person name="Goodhead I."/>
            <person name="Muzny D.M."/>
            <person name="Mourier T."/>
            <person name="Pain A."/>
            <person name="Lu M."/>
            <person name="Harper D."/>
            <person name="Lindsay R."/>
            <person name="Hauser H."/>
            <person name="James K.D."/>
            <person name="Quiles M."/>
            <person name="Madan Babu M."/>
            <person name="Saito T."/>
            <person name="Buchrieser C."/>
            <person name="Wardroper A."/>
            <person name="Felder M."/>
            <person name="Thangavelu M."/>
            <person name="Johnson D."/>
            <person name="Knights A."/>
            <person name="Loulseged H."/>
            <person name="Mungall K.L."/>
            <person name="Oliver K."/>
            <person name="Price C."/>
            <person name="Quail M.A."/>
            <person name="Urushihara H."/>
            <person name="Hernandez J."/>
            <person name="Rabbinowitsch E."/>
            <person name="Steffen D."/>
            <person name="Sanders M."/>
            <person name="Ma J."/>
            <person name="Kohara Y."/>
            <person name="Sharp S."/>
            <person name="Simmonds M.N."/>
            <person name="Spiegler S."/>
            <person name="Tivey A."/>
            <person name="Sugano S."/>
            <person name="White B."/>
            <person name="Walker D."/>
            <person name="Woodward J.R."/>
            <person name="Winckler T."/>
            <person name="Tanaka Y."/>
            <person name="Shaulsky G."/>
            <person name="Schleicher M."/>
            <person name="Weinstock G.M."/>
            <person name="Rosenthal A."/>
            <person name="Cox E.C."/>
            <person name="Chisholm R.L."/>
            <person name="Gibbs R.A."/>
            <person name="Loomis W.F."/>
            <person name="Platzer M."/>
            <person name="Kay R.R."/>
            <person name="Williams J.G."/>
            <person name="Dear P.H."/>
            <person name="Noegel A.A."/>
            <person name="Barrell B.G."/>
            <person name="Kuspa A."/>
        </authorList>
    </citation>
    <scope>NUCLEOTIDE SEQUENCE [LARGE SCALE GENOMIC DNA]</scope>
    <source>
        <strain>AX4</strain>
    </source>
</reference>
<evidence type="ECO:0000255" key="1"/>
<evidence type="ECO:0000255" key="2">
    <source>
        <dbReference type="PROSITE-ProRule" id="PRU00159"/>
    </source>
</evidence>
<evidence type="ECO:0000255" key="3">
    <source>
        <dbReference type="PROSITE-ProRule" id="PRU00175"/>
    </source>
</evidence>
<evidence type="ECO:0000256" key="4">
    <source>
        <dbReference type="SAM" id="MobiDB-lite"/>
    </source>
</evidence>
<evidence type="ECO:0000305" key="5"/>
<gene>
    <name type="ORF">DDB_G0274613</name>
</gene>
<accession>Q554L2</accession>
<sequence>MDPFEFLECSICSEEVIDFAAIFSSNKKFGDKACKHNFCVSCLTYLMEYNTRNKKALCCPICREEFDGFIQNKTSSDLLKQARKLSSAQIFLKNENSKLNEEINLIKNERENEAIQYRDRIKQLEDSKSKQVQESTNIKSRIKEMENEIQSLEQARLLDLQNNQSKFDTQQQQILTLTQSYRESQSNYNDSNLRANELNNQIQKLYREIEGFKQHAQQQDNYIKDIDSEKQLLQQQLSTIEQSYDRKQSDLLNNTRLKDLQIAKLSDANQQLGTSLSKIEAECEHFKKLYKEIQEDANGGYQKNKNLESAIASLNIELSRSKSVIDSLNTNKRTLEKELEEMKLLYQFGRGTSISSSIAPPTIINTANKITNSSYNLINNSIGYFMGSKNYLNDITKPYKGFKIEEKRGNKTSQIHKVSIGNGCGHFVIKLIPTVSGTNVGNSYSKFIYNSIYSSTLAESEILLFREAMLLYKLNHNNILKLESITKDESSGKYYSVLSPFVPKDLEFILAENSQNFGGLGKISPTTLTFSDIKYIVYQLISVVHYLHTQDLVHRDLKPTSILLFDDYQIKLCSFGNAISVFTNFGNSITQPTYSNPSSYSYLSPEYICSVLDKENHSKLSNEIDWKAFDMWSIGCIFLELIYKKKLFNNLNLDNNNNNNNNNNNNNNNNNNNNNNNNNNNNNNNNNNNNNNNNNNNIESNFNNVNNSQQQQLYSVLNNISTYKESAPKNGNLYFKENHNIIIKSKVERDFNGANLPTDAYNLLCALLSFNPTTRIKANQAAFHKFFKDEPYYIHDSASVSPNKLEDLSSLLTDRNIKQFLKEKCSNLIQV</sequence>
<comment type="domain">
    <text>The protein kinase domain is predicted to be catalytically inactive.</text>
</comment>
<comment type="similarity">
    <text evidence="5">Belongs to the protein kinase superfamily. CMGC Ser/Thr protein kinase family.</text>
</comment>
<name>Y4613_DICDI</name>
<proteinExistence type="inferred from homology"/>
<feature type="chain" id="PRO_0000362055" description="Probable inactive serine/threonine-protein kinase DDB_G0274613">
    <location>
        <begin position="1"/>
        <end position="831"/>
    </location>
</feature>
<feature type="domain" description="Protein kinase" evidence="2">
    <location>
        <begin position="414"/>
        <end position="787"/>
    </location>
</feature>
<feature type="zinc finger region" description="RING-type" evidence="3">
    <location>
        <begin position="9"/>
        <end position="63"/>
    </location>
</feature>
<feature type="region of interest" description="Disordered" evidence="4">
    <location>
        <begin position="657"/>
        <end position="703"/>
    </location>
</feature>
<feature type="coiled-coil region" evidence="1">
    <location>
        <begin position="83"/>
        <end position="348"/>
    </location>
</feature>